<evidence type="ECO:0000256" key="1">
    <source>
        <dbReference type="SAM" id="MobiDB-lite"/>
    </source>
</evidence>
<evidence type="ECO:0000269" key="2">
    <source>
    </source>
</evidence>
<evidence type="ECO:0000269" key="3">
    <source>
    </source>
</evidence>
<evidence type="ECO:0000269" key="4">
    <source>
    </source>
</evidence>
<evidence type="ECO:0000305" key="5"/>
<evidence type="ECO:0007744" key="6">
    <source>
    </source>
</evidence>
<evidence type="ECO:0007744" key="7">
    <source>
    </source>
</evidence>
<evidence type="ECO:0007744" key="8">
    <source>
    </source>
</evidence>
<evidence type="ECO:0007744" key="9">
    <source>
    </source>
</evidence>
<evidence type="ECO:0007744" key="10">
    <source>
    </source>
</evidence>
<keyword id="KW-0963">Cytoplasm</keyword>
<keyword id="KW-0597">Phosphoprotein</keyword>
<keyword id="KW-1185">Reference proteome</keyword>
<keyword id="KW-0862">Zinc</keyword>
<dbReference type="EMBL" id="U18796">
    <property type="protein sequence ID" value="AAB64568.1"/>
    <property type="molecule type" value="Genomic_DNA"/>
</dbReference>
<dbReference type="EMBL" id="BK006939">
    <property type="protein sequence ID" value="DAA07686.1"/>
    <property type="molecule type" value="Genomic_DNA"/>
</dbReference>
<dbReference type="PIR" id="S50536">
    <property type="entry name" value="S50536"/>
</dbReference>
<dbReference type="RefSeq" id="NP_010950.1">
    <property type="nucleotide sequence ID" value="NM_001178924.1"/>
</dbReference>
<dbReference type="SMR" id="P40021"/>
<dbReference type="BioGRID" id="36768">
    <property type="interactions" value="50"/>
</dbReference>
<dbReference type="FunCoup" id="P40021">
    <property type="interactions" value="90"/>
</dbReference>
<dbReference type="IntAct" id="P40021">
    <property type="interactions" value="11"/>
</dbReference>
<dbReference type="MINT" id="P40021"/>
<dbReference type="STRING" id="4932.YER033C"/>
<dbReference type="iPTMnet" id="P40021"/>
<dbReference type="PaxDb" id="4932-YER033C"/>
<dbReference type="PeptideAtlas" id="P40021"/>
<dbReference type="EnsemblFungi" id="YER033C_mRNA">
    <property type="protein sequence ID" value="YER033C"/>
    <property type="gene ID" value="YER033C"/>
</dbReference>
<dbReference type="GeneID" id="856755"/>
<dbReference type="KEGG" id="sce:YER033C"/>
<dbReference type="AGR" id="SGD:S000000835"/>
<dbReference type="SGD" id="S000000835">
    <property type="gene designation" value="ZRG8"/>
</dbReference>
<dbReference type="VEuPathDB" id="FungiDB:YER033C"/>
<dbReference type="eggNOG" id="ENOG502QSM8">
    <property type="taxonomic scope" value="Eukaryota"/>
</dbReference>
<dbReference type="HOGENOM" id="CLU_301677_0_0_1"/>
<dbReference type="InParanoid" id="P40021"/>
<dbReference type="OMA" id="QSLKYHD"/>
<dbReference type="OrthoDB" id="3973129at2759"/>
<dbReference type="BioCyc" id="YEAST:G3O-30214-MONOMER"/>
<dbReference type="BioGRID-ORCS" id="856755">
    <property type="hits" value="4 hits in 10 CRISPR screens"/>
</dbReference>
<dbReference type="PRO" id="PR:P40021"/>
<dbReference type="Proteomes" id="UP000002311">
    <property type="component" value="Chromosome V"/>
</dbReference>
<dbReference type="RNAct" id="P40021">
    <property type="molecule type" value="protein"/>
</dbReference>
<dbReference type="GO" id="GO:0005933">
    <property type="term" value="C:cellular bud"/>
    <property type="evidence" value="ECO:0000314"/>
    <property type="project" value="SGD"/>
</dbReference>
<dbReference type="GO" id="GO:0005935">
    <property type="term" value="C:cellular bud neck"/>
    <property type="evidence" value="ECO:0000314"/>
    <property type="project" value="SGD"/>
</dbReference>
<dbReference type="GO" id="GO:0005934">
    <property type="term" value="C:cellular bud tip"/>
    <property type="evidence" value="ECO:0007669"/>
    <property type="project" value="UniProtKB-SubCell"/>
</dbReference>
<dbReference type="GO" id="GO:0005737">
    <property type="term" value="C:cytoplasm"/>
    <property type="evidence" value="ECO:0007005"/>
    <property type="project" value="SGD"/>
</dbReference>
<dbReference type="GO" id="GO:0043332">
    <property type="term" value="C:mating projection tip"/>
    <property type="evidence" value="ECO:0000314"/>
    <property type="project" value="SGD"/>
</dbReference>
<dbReference type="GO" id="GO:0005739">
    <property type="term" value="C:mitochondrion"/>
    <property type="evidence" value="ECO:0007005"/>
    <property type="project" value="SGD"/>
</dbReference>
<dbReference type="GO" id="GO:0031505">
    <property type="term" value="P:fungal-type cell wall organization"/>
    <property type="evidence" value="ECO:0000315"/>
    <property type="project" value="SGD"/>
</dbReference>
<name>ZRG8_YEAST</name>
<organism>
    <name type="scientific">Saccharomyces cerevisiae (strain ATCC 204508 / S288c)</name>
    <name type="common">Baker's yeast</name>
    <dbReference type="NCBI Taxonomy" id="559292"/>
    <lineage>
        <taxon>Eukaryota</taxon>
        <taxon>Fungi</taxon>
        <taxon>Dikarya</taxon>
        <taxon>Ascomycota</taxon>
        <taxon>Saccharomycotina</taxon>
        <taxon>Saccharomycetes</taxon>
        <taxon>Saccharomycetales</taxon>
        <taxon>Saccharomycetaceae</taxon>
        <taxon>Saccharomyces</taxon>
    </lineage>
</organism>
<gene>
    <name type="primary">ZRG8</name>
    <name type="ordered locus">YER033C</name>
</gene>
<sequence length="1076" mass="119350">MRSFIKAHKKSTSFDESPKRHSNFSGNTNNSSQRSSDDSLDFLPSTPSQMNYDSIPPPAKHSPGFESFHRLANKTSKLFKKTSNSNLNSHLASTPTTSTNQTTSNSFVLQNPPTKNTGPPPPLPPPLFPSSSTSSFSRHDNESEYTAYKKTSPAKDFNRTTDSLPAIKGTITHSWGDSKVESHVIILNDPASPASNTSEATSSKQFKTPIIGNENLTSTTSPSNLEPAIRILNKNKGKQQENIDDAEDGSSKKEHHVYKALALAKNRNRQARIHSHDDIINLGKASQMDMSLLAAAFSGNSTTTINNDQSSNEQTDEKILDIERVTTTSTLTSSETTSPINKSPCFYSQTLSLSPKIRHGDLQSSPSKVNKNDSQNETLNKKKVRISLNRKEEEKVYSLNNNSDEYSVNEKETHKANDCNDESSENGDGDNDHDDDYDDDDDDDDDDDESEFSFEYAGINVRTSSVKYYSKPEPAANVYIDDLYEDENFDDDMNCIEDDESGNEGNEICGLSTRFEETSLKSNKVKKFNDLFNLSDDDEEEDGKDNSNNGDENESDNLYQKRLENGKETFNGNHGGHHDDASLGETVDNKEQFLINDNVKKPIQKYNDLFDLSDEDDNDDKEMSEAESYMFSDEAPSIESGPANAKSTRGIYSQSNKNIIRDGKPNYSFSLKRNNSDDETEHTSAIKASLTGTTGSTKPTVKSFSDIFNVDDSASDAESDSGTGGNNSNGLVSNDSERQVSLQSSLYETKSESHPPNHPHSQILQTPAKIVITPSVSDAQSQALAITDDDGEDDDDDTSSILRTPFQLIDSSHSQQPHYASPQYTAVLNSPPLPPPARSQSLKYHDLNCDLDSEVPRPMSNLFFIDEAEEDEYNQKSKFFDFDHYDIDEINGIPEDFNFSDSERDDLNRRTLKSPLRGGSKNREVSPFSSVSSSFRSTHSFNGKLTINQGAKELAPMKNKIELTNKTVTFFNSNNWNTYDCNSLSRKTSSQMRDSKYQNHNVGQNVEPSSVLSPQHQISNGLDGKCNDNYVISPNLPTTITPTNSFTKPTPEFSNDYSLSPIQETPSSVQSSPKRA</sequence>
<reference key="1">
    <citation type="journal article" date="1997" name="Nature">
        <title>The nucleotide sequence of Saccharomyces cerevisiae chromosome V.</title>
        <authorList>
            <person name="Dietrich F.S."/>
            <person name="Mulligan J.T."/>
            <person name="Hennessy K.M."/>
            <person name="Yelton M.A."/>
            <person name="Allen E."/>
            <person name="Araujo R."/>
            <person name="Aviles E."/>
            <person name="Berno A."/>
            <person name="Brennan T."/>
            <person name="Carpenter J."/>
            <person name="Chen E."/>
            <person name="Cherry J.M."/>
            <person name="Chung E."/>
            <person name="Duncan M."/>
            <person name="Guzman E."/>
            <person name="Hartzell G."/>
            <person name="Hunicke-Smith S."/>
            <person name="Hyman R.W."/>
            <person name="Kayser A."/>
            <person name="Komp C."/>
            <person name="Lashkari D."/>
            <person name="Lew H."/>
            <person name="Lin D."/>
            <person name="Mosedale D."/>
            <person name="Nakahara K."/>
            <person name="Namath A."/>
            <person name="Norgren R."/>
            <person name="Oefner P."/>
            <person name="Oh C."/>
            <person name="Petel F.X."/>
            <person name="Roberts D."/>
            <person name="Sehl P."/>
            <person name="Schramm S."/>
            <person name="Shogren T."/>
            <person name="Smith V."/>
            <person name="Taylor P."/>
            <person name="Wei Y."/>
            <person name="Botstein D."/>
            <person name="Davis R.W."/>
        </authorList>
    </citation>
    <scope>NUCLEOTIDE SEQUENCE [LARGE SCALE GENOMIC DNA]</scope>
    <source>
        <strain>ATCC 204508 / S288c</strain>
    </source>
</reference>
<reference key="2">
    <citation type="journal article" date="2014" name="G3 (Bethesda)">
        <title>The reference genome sequence of Saccharomyces cerevisiae: Then and now.</title>
        <authorList>
            <person name="Engel S.R."/>
            <person name="Dietrich F.S."/>
            <person name="Fisk D.G."/>
            <person name="Binkley G."/>
            <person name="Balakrishnan R."/>
            <person name="Costanzo M.C."/>
            <person name="Dwight S.S."/>
            <person name="Hitz B.C."/>
            <person name="Karra K."/>
            <person name="Nash R.S."/>
            <person name="Weng S."/>
            <person name="Wong E.D."/>
            <person name="Lloyd P."/>
            <person name="Skrzypek M.S."/>
            <person name="Miyasato S.R."/>
            <person name="Simison M."/>
            <person name="Cherry J.M."/>
        </authorList>
    </citation>
    <scope>GENOME REANNOTATION</scope>
    <source>
        <strain>ATCC 204508 / S288c</strain>
    </source>
</reference>
<reference key="3">
    <citation type="journal article" date="2000" name="Genetics">
        <title>Zinc-regulated genes in Saccharomyces cerevisiae revealed by transposon tagging.</title>
        <authorList>
            <person name="Yuan D.S."/>
        </authorList>
    </citation>
    <scope>INDUCTION</scope>
</reference>
<reference key="4">
    <citation type="journal article" date="2003" name="Nature">
        <title>Global analysis of protein localization in budding yeast.</title>
        <authorList>
            <person name="Huh W.-K."/>
            <person name="Falvo J.V."/>
            <person name="Gerke L.C."/>
            <person name="Carroll A.S."/>
            <person name="Howson R.W."/>
            <person name="Weissman J.S."/>
            <person name="O'Shea E.K."/>
        </authorList>
    </citation>
    <scope>SUBCELLULAR LOCATION [LARGE SCALE ANALYSIS]</scope>
</reference>
<reference key="5">
    <citation type="journal article" date="2005" name="Genetics">
        <title>A role for the Saccharomyces cerevisiae regulation of Ace2 and polarized morphogenesis signaling network in cell integrity.</title>
        <authorList>
            <person name="Kurischko C."/>
            <person name="Weiss G."/>
            <person name="Ottey M."/>
            <person name="Luca F.C."/>
        </authorList>
    </citation>
    <scope>FUNCTION</scope>
    <scope>SUBCELLULAR LOCATION</scope>
    <scope>INTERACTION WITH SSD1</scope>
</reference>
<reference key="6">
    <citation type="journal article" date="2005" name="Mol. Cell. Proteomics">
        <title>Quantitative phosphoproteomics applied to the yeast pheromone signaling pathway.</title>
        <authorList>
            <person name="Gruhler A."/>
            <person name="Olsen J.V."/>
            <person name="Mohammed S."/>
            <person name="Mortensen P."/>
            <person name="Faergeman N.J."/>
            <person name="Mann M."/>
            <person name="Jensen O.N."/>
        </authorList>
    </citation>
    <scope>PHOSPHORYLATION [LARGE SCALE ANALYSIS] AT SER-354</scope>
    <scope>IDENTIFICATION BY MASS SPECTROMETRY [LARGE SCALE ANALYSIS]</scope>
    <source>
        <strain>YAL6B</strain>
    </source>
</reference>
<reference key="7">
    <citation type="journal article" date="2007" name="J. Proteome Res.">
        <title>Large-scale phosphorylation analysis of alpha-factor-arrested Saccharomyces cerevisiae.</title>
        <authorList>
            <person name="Li X."/>
            <person name="Gerber S.A."/>
            <person name="Rudner A.D."/>
            <person name="Beausoleil S.A."/>
            <person name="Haas W."/>
            <person name="Villen J."/>
            <person name="Elias J.E."/>
            <person name="Gygi S.P."/>
        </authorList>
    </citation>
    <scope>PHOSPHORYLATION [LARGE SCALE ANALYSIS] AT SER-275</scope>
    <scope>IDENTIFICATION BY MASS SPECTROMETRY [LARGE SCALE ANALYSIS]</scope>
    <source>
        <strain>ADR376</strain>
    </source>
</reference>
<reference key="8">
    <citation type="journal article" date="2007" name="Mol. Genet. Genomics">
        <title>The jmjN and jmjC domains of the yeast zinc finger protein Gis1 interact with 19 proteins involved in transcription, sumoylation and DNA repair.</title>
        <authorList>
            <person name="Tronnersjoe S."/>
            <person name="Hanefalk C."/>
            <person name="Balciunas D."/>
            <person name="Hu G.-Z."/>
            <person name="Nordberg N."/>
            <person name="Muren E."/>
            <person name="Ronne H."/>
        </authorList>
    </citation>
    <scope>INTERACTION WITH BUD27 AND GIS1</scope>
</reference>
<reference key="9">
    <citation type="journal article" date="2007" name="Proc. Natl. Acad. Sci. U.S.A.">
        <title>Analysis of phosphorylation sites on proteins from Saccharomyces cerevisiae by electron transfer dissociation (ETD) mass spectrometry.</title>
        <authorList>
            <person name="Chi A."/>
            <person name="Huttenhower C."/>
            <person name="Geer L.Y."/>
            <person name="Coon J.J."/>
            <person name="Syka J.E.P."/>
            <person name="Bai D.L."/>
            <person name="Shabanowitz J."/>
            <person name="Burke D.J."/>
            <person name="Troyanskaya O.G."/>
            <person name="Hunt D.F."/>
        </authorList>
    </citation>
    <scope>PHOSPHORYLATION [LARGE SCALE ANALYSIS] AT SER-676</scope>
    <scope>IDENTIFICATION BY MASS SPECTROMETRY [LARGE SCALE ANALYSIS]</scope>
</reference>
<reference key="10">
    <citation type="journal article" date="2008" name="Mol. Cell. Proteomics">
        <title>A multidimensional chromatography technology for in-depth phosphoproteome analysis.</title>
        <authorList>
            <person name="Albuquerque C.P."/>
            <person name="Smolka M.B."/>
            <person name="Payne S.H."/>
            <person name="Bafna V."/>
            <person name="Eng J."/>
            <person name="Zhou H."/>
        </authorList>
    </citation>
    <scope>PHOSPHORYLATION [LARGE SCALE ANALYSIS] AT SER-275; SER-403 AND SER-632</scope>
    <scope>IDENTIFICATION BY MASS SPECTROMETRY [LARGE SCALE ANALYSIS]</scope>
</reference>
<reference key="11">
    <citation type="journal article" date="2009" name="Science">
        <title>Global analysis of Cdk1 substrate phosphorylation sites provides insights into evolution.</title>
        <authorList>
            <person name="Holt L.J."/>
            <person name="Tuch B.B."/>
            <person name="Villen J."/>
            <person name="Johnson A.D."/>
            <person name="Gygi S.P."/>
            <person name="Morgan D.O."/>
        </authorList>
    </citation>
    <scope>PHOSPHORYLATION [LARGE SCALE ANALYSIS] AT SER-275; SER-354; SER-403 AND SER-407</scope>
    <scope>IDENTIFICATION BY MASS SPECTROMETRY [LARGE SCALE ANALYSIS]</scope>
</reference>
<feature type="chain" id="PRO_0000202624" description="Zinc-regulated protein 8">
    <location>
        <begin position="1"/>
        <end position="1076"/>
    </location>
</feature>
<feature type="region of interest" description="Disordered" evidence="1">
    <location>
        <begin position="1"/>
        <end position="66"/>
    </location>
</feature>
<feature type="region of interest" description="Disordered" evidence="1">
    <location>
        <begin position="85"/>
        <end position="162"/>
    </location>
</feature>
<feature type="region of interest" description="Disordered" evidence="1">
    <location>
        <begin position="190"/>
        <end position="223"/>
    </location>
</feature>
<feature type="region of interest" description="Disordered" evidence="1">
    <location>
        <begin position="234"/>
        <end position="253"/>
    </location>
</feature>
<feature type="region of interest" description="Disordered" evidence="1">
    <location>
        <begin position="357"/>
        <end position="450"/>
    </location>
</feature>
<feature type="region of interest" description="Disordered" evidence="1">
    <location>
        <begin position="534"/>
        <end position="557"/>
    </location>
</feature>
<feature type="region of interest" description="Disordered" evidence="1">
    <location>
        <begin position="566"/>
        <end position="585"/>
    </location>
</feature>
<feature type="region of interest" description="Disordered" evidence="1">
    <location>
        <begin position="658"/>
        <end position="701"/>
    </location>
</feature>
<feature type="region of interest" description="Disordered" evidence="1">
    <location>
        <begin position="713"/>
        <end position="762"/>
    </location>
</feature>
<feature type="region of interest" description="Disordered" evidence="1">
    <location>
        <begin position="909"/>
        <end position="931"/>
    </location>
</feature>
<feature type="region of interest" description="Disordered" evidence="1">
    <location>
        <begin position="1000"/>
        <end position="1020"/>
    </location>
</feature>
<feature type="region of interest" description="Disordered" evidence="1">
    <location>
        <begin position="1042"/>
        <end position="1076"/>
    </location>
</feature>
<feature type="compositionally biased region" description="Basic residues" evidence="1">
    <location>
        <begin position="1"/>
        <end position="11"/>
    </location>
</feature>
<feature type="compositionally biased region" description="Polar residues" evidence="1">
    <location>
        <begin position="23"/>
        <end position="34"/>
    </location>
</feature>
<feature type="compositionally biased region" description="Low complexity" evidence="1">
    <location>
        <begin position="93"/>
        <end position="106"/>
    </location>
</feature>
<feature type="compositionally biased region" description="Polar residues" evidence="1">
    <location>
        <begin position="107"/>
        <end position="117"/>
    </location>
</feature>
<feature type="compositionally biased region" description="Pro residues" evidence="1">
    <location>
        <begin position="118"/>
        <end position="128"/>
    </location>
</feature>
<feature type="compositionally biased region" description="Polar residues" evidence="1">
    <location>
        <begin position="193"/>
        <end position="206"/>
    </location>
</feature>
<feature type="compositionally biased region" description="Polar residues" evidence="1">
    <location>
        <begin position="214"/>
        <end position="223"/>
    </location>
</feature>
<feature type="compositionally biased region" description="Polar residues" evidence="1">
    <location>
        <begin position="362"/>
        <end position="378"/>
    </location>
</feature>
<feature type="compositionally biased region" description="Basic and acidic residues" evidence="1">
    <location>
        <begin position="408"/>
        <end position="418"/>
    </location>
</feature>
<feature type="compositionally biased region" description="Acidic residues" evidence="1">
    <location>
        <begin position="419"/>
        <end position="450"/>
    </location>
</feature>
<feature type="compositionally biased region" description="Basic and acidic residues" evidence="1">
    <location>
        <begin position="576"/>
        <end position="585"/>
    </location>
</feature>
<feature type="compositionally biased region" description="Polar residues" evidence="1">
    <location>
        <begin position="690"/>
        <end position="701"/>
    </location>
</feature>
<feature type="compositionally biased region" description="Polar residues" evidence="1">
    <location>
        <begin position="739"/>
        <end position="748"/>
    </location>
</feature>
<feature type="modified residue" description="Phosphoserine" evidence="8 9 10">
    <location>
        <position position="275"/>
    </location>
</feature>
<feature type="modified residue" description="Phosphoserine" evidence="6 10">
    <location>
        <position position="354"/>
    </location>
</feature>
<feature type="modified residue" description="Phosphoserine" evidence="9 10">
    <location>
        <position position="403"/>
    </location>
</feature>
<feature type="modified residue" description="Phosphoserine" evidence="10">
    <location>
        <position position="407"/>
    </location>
</feature>
<feature type="modified residue" description="Phosphoserine" evidence="9">
    <location>
        <position position="632"/>
    </location>
</feature>
<feature type="modified residue" description="Phosphoserine" evidence="7">
    <location>
        <position position="676"/>
    </location>
</feature>
<comment type="function">
    <text evidence="3">Involved in the integrity functions of RAM, a conserved signaling network that regulates maintenance of polarized growth and daughter-cell-specific transcription.</text>
</comment>
<comment type="subunit">
    <text evidence="3 4">Interacts with BUD27, GIS1 and SSD1.</text>
</comment>
<comment type="interaction">
    <interactant intactId="EBI-22484">
        <id>P40021</id>
    </interactant>
    <interactant intactId="EBI-11687">
        <id>Q04439</id>
        <label>MYO5</label>
    </interactant>
    <organismsDiffer>false</organismsDiffer>
    <experiments>2</experiments>
</comment>
<comment type="subcellular location">
    <subcellularLocation>
        <location>Cytoplasm</location>
    </subcellularLocation>
    <subcellularLocation>
        <location>Bud</location>
    </subcellularLocation>
    <subcellularLocation>
        <location>Bud neck</location>
    </subcellularLocation>
    <subcellularLocation>
        <location>Bud tip</location>
    </subcellularLocation>
    <text>Localized to the cortex of small and large buds during bud growth, to the bud neck during mitotic exit and to the tips of mating projections in pheromone-treated cells.</text>
</comment>
<comment type="induction">
    <text evidence="2">Repressed by zinc.</text>
</comment>
<comment type="similarity">
    <text evidence="5">Belongs to the ZRG8 family.</text>
</comment>
<proteinExistence type="evidence at protein level"/>
<accession>P40021</accession>
<accession>D3DLT2</accession>
<protein>
    <recommendedName>
        <fullName>Zinc-regulated protein 8</fullName>
    </recommendedName>
</protein>